<sequence length="512" mass="55976">MLTMGTALSQQVDANWQTYIMIAVYFLILIVIGFYGYKQATGNLSEYMLGGRSIGPYITALSAGASDMSGWMIMGLPGSVYSTGLSAMWITIGLTLGAYINYFVVAPRLRVYTELAGDAITLPDFFKNRLNDKNNVLKIISGLIIVVFFTLYTHSGFVSGGKLFESAFGLDYHFGLILVAFIVIFYTFFGGYLAVSITDFFQGVIMLIAMVMVPIVAMMNLNGWGTFHDVAAMKPTNLNLFKGLSFIGIISLFSWGLGYFGQPHIIVRFMSIKSHKMLPKARRLGISWMAVGLLGAVAVGLTGIAFVPAYHIKLEDPETLFIVMSQVLFHPLVGGFLLAAILAAIMSTISSQLLVTSSSLTEDFYKLIRGEEKAKTHQKEFVMIGRLSVLVVAIVAIAIAWNPNDTILNLVGNAWAGFGASFSPLVLFALYWKGLTRAGAVSGMVSGALVVIVWIAWIKPLAHINEIFGLYEIIPGFIVSVIVTYVVSKLTKKPGAFVETDLNKVRDIVREK</sequence>
<evidence type="ECO:0000250" key="1">
    <source>
        <dbReference type="UniProtKB" id="P07117"/>
    </source>
</evidence>
<evidence type="ECO:0000250" key="2">
    <source>
        <dbReference type="UniProtKB" id="Q2FWY7"/>
    </source>
</evidence>
<evidence type="ECO:0000255" key="3"/>
<evidence type="ECO:0000305" key="4"/>
<reference key="1">
    <citation type="journal article" date="2008" name="Antimicrob. Agents Chemother.">
        <title>Mutated response regulator graR is responsible for phenotypic conversion of Staphylococcus aureus from heterogeneous vancomycin-intermediate resistance to vancomycin-intermediate resistance.</title>
        <authorList>
            <person name="Neoh H.-M."/>
            <person name="Cui L."/>
            <person name="Yuzawa H."/>
            <person name="Takeuchi F."/>
            <person name="Matsuo M."/>
            <person name="Hiramatsu K."/>
        </authorList>
    </citation>
    <scope>NUCLEOTIDE SEQUENCE [LARGE SCALE GENOMIC DNA]</scope>
    <source>
        <strain>Mu3 / ATCC 700698</strain>
    </source>
</reference>
<dbReference type="EMBL" id="AP009324">
    <property type="protein sequence ID" value="BAF78770.1"/>
    <property type="molecule type" value="Genomic_DNA"/>
</dbReference>
<dbReference type="RefSeq" id="WP_000957020.1">
    <property type="nucleotide sequence ID" value="NC_009782.1"/>
</dbReference>
<dbReference type="SMR" id="A7X430"/>
<dbReference type="KEGG" id="saw:SAHV_1887"/>
<dbReference type="HOGENOM" id="CLU_018808_15_2_9"/>
<dbReference type="GO" id="GO:0005886">
    <property type="term" value="C:plasma membrane"/>
    <property type="evidence" value="ECO:0007669"/>
    <property type="project" value="UniProtKB-SubCell"/>
</dbReference>
<dbReference type="GO" id="GO:0015193">
    <property type="term" value="F:L-proline transmembrane transporter activity"/>
    <property type="evidence" value="ECO:0007669"/>
    <property type="project" value="TreeGrafter"/>
</dbReference>
<dbReference type="GO" id="GO:0005298">
    <property type="term" value="F:proline:sodium symporter activity"/>
    <property type="evidence" value="ECO:0007669"/>
    <property type="project" value="InterPro"/>
</dbReference>
<dbReference type="GO" id="GO:0031402">
    <property type="term" value="F:sodium ion binding"/>
    <property type="evidence" value="ECO:0007669"/>
    <property type="project" value="InterPro"/>
</dbReference>
<dbReference type="GO" id="GO:0015824">
    <property type="term" value="P:proline transport"/>
    <property type="evidence" value="ECO:0007669"/>
    <property type="project" value="InterPro"/>
</dbReference>
<dbReference type="CDD" id="cd11475">
    <property type="entry name" value="SLC5sbd_PutP"/>
    <property type="match status" value="1"/>
</dbReference>
<dbReference type="FunFam" id="1.20.1730.10:FF:000002">
    <property type="entry name" value="Sodium/proline symporter"/>
    <property type="match status" value="1"/>
</dbReference>
<dbReference type="Gene3D" id="1.20.1730.10">
    <property type="entry name" value="Sodium/glucose cotransporter"/>
    <property type="match status" value="1"/>
</dbReference>
<dbReference type="InterPro" id="IPR038377">
    <property type="entry name" value="Na/Glc_symporter_sf"/>
</dbReference>
<dbReference type="InterPro" id="IPR011851">
    <property type="entry name" value="Na/Pro_symporter"/>
</dbReference>
<dbReference type="InterPro" id="IPR001734">
    <property type="entry name" value="Na/solute_symporter"/>
</dbReference>
<dbReference type="InterPro" id="IPR050277">
    <property type="entry name" value="Sodium:Solute_Symporter"/>
</dbReference>
<dbReference type="NCBIfam" id="TIGR02121">
    <property type="entry name" value="Na_Pro_sym"/>
    <property type="match status" value="1"/>
</dbReference>
<dbReference type="NCBIfam" id="TIGR00813">
    <property type="entry name" value="sss"/>
    <property type="match status" value="1"/>
</dbReference>
<dbReference type="PANTHER" id="PTHR48086">
    <property type="entry name" value="SODIUM/PROLINE SYMPORTER-RELATED"/>
    <property type="match status" value="1"/>
</dbReference>
<dbReference type="PANTHER" id="PTHR48086:SF3">
    <property type="entry name" value="SODIUM_PROLINE SYMPORTER"/>
    <property type="match status" value="1"/>
</dbReference>
<dbReference type="Pfam" id="PF00474">
    <property type="entry name" value="SSF"/>
    <property type="match status" value="1"/>
</dbReference>
<dbReference type="PROSITE" id="PS50283">
    <property type="entry name" value="NA_SOLUT_SYMP_3"/>
    <property type="match status" value="1"/>
</dbReference>
<gene>
    <name type="primary">putP</name>
    <name type="ordered locus">SAHV_1887</name>
</gene>
<comment type="function">
    <text evidence="1 2">Catalyzes the sodium-dependent uptake of extracellular L-proline (By similarity). Since most S.aureus strains are L-proline auxotrophs, this transporter may aid the bacterial persistence during an infection of tissues with low proline concentrations (By similarity).</text>
</comment>
<comment type="catalytic activity">
    <reaction evidence="1">
        <text>L-proline(in) + Na(+)(in) = L-proline(out) + Na(+)(out)</text>
        <dbReference type="Rhea" id="RHEA:28967"/>
        <dbReference type="ChEBI" id="CHEBI:29101"/>
        <dbReference type="ChEBI" id="CHEBI:60039"/>
    </reaction>
</comment>
<comment type="subcellular location">
    <subcellularLocation>
        <location evidence="4">Cell membrane</location>
        <topology evidence="3">Multi-pass membrane protein</topology>
    </subcellularLocation>
</comment>
<comment type="similarity">
    <text evidence="4">Belongs to the sodium:solute symporter (SSF) (TC 2.A.21) family.</text>
</comment>
<feature type="chain" id="PRO_0000364098" description="Sodium/proline symporter">
    <location>
        <begin position="1"/>
        <end position="512"/>
    </location>
</feature>
<feature type="transmembrane region" description="Helical" evidence="3">
    <location>
        <begin position="16"/>
        <end position="36"/>
    </location>
</feature>
<feature type="transmembrane region" description="Helical" evidence="3">
    <location>
        <begin position="54"/>
        <end position="74"/>
    </location>
</feature>
<feature type="transmembrane region" description="Helical" evidence="3">
    <location>
        <begin position="85"/>
        <end position="105"/>
    </location>
</feature>
<feature type="transmembrane region" description="Helical" evidence="3">
    <location>
        <begin position="139"/>
        <end position="159"/>
    </location>
</feature>
<feature type="transmembrane region" description="Helical" evidence="3">
    <location>
        <begin position="174"/>
        <end position="194"/>
    </location>
</feature>
<feature type="transmembrane region" description="Helical" evidence="3">
    <location>
        <begin position="200"/>
        <end position="220"/>
    </location>
</feature>
<feature type="transmembrane region" description="Helical" evidence="3">
    <location>
        <begin position="240"/>
        <end position="260"/>
    </location>
</feature>
<feature type="transmembrane region" description="Helical" evidence="3">
    <location>
        <begin position="286"/>
        <end position="306"/>
    </location>
</feature>
<feature type="transmembrane region" description="Helical" evidence="3">
    <location>
        <begin position="327"/>
        <end position="347"/>
    </location>
</feature>
<feature type="transmembrane region" description="Helical" evidence="3">
    <location>
        <begin position="381"/>
        <end position="401"/>
    </location>
</feature>
<feature type="transmembrane region" description="Helical" evidence="3">
    <location>
        <begin position="410"/>
        <end position="430"/>
    </location>
</feature>
<feature type="transmembrane region" description="Helical" evidence="3">
    <location>
        <begin position="438"/>
        <end position="458"/>
    </location>
</feature>
<feature type="transmembrane region" description="Helical" evidence="3">
    <location>
        <begin position="467"/>
        <end position="487"/>
    </location>
</feature>
<name>PUTP_STAA1</name>
<protein>
    <recommendedName>
        <fullName>Sodium/proline symporter</fullName>
    </recommendedName>
    <alternativeName>
        <fullName>Proline permease</fullName>
    </alternativeName>
</protein>
<organism>
    <name type="scientific">Staphylococcus aureus (strain Mu3 / ATCC 700698)</name>
    <dbReference type="NCBI Taxonomy" id="418127"/>
    <lineage>
        <taxon>Bacteria</taxon>
        <taxon>Bacillati</taxon>
        <taxon>Bacillota</taxon>
        <taxon>Bacilli</taxon>
        <taxon>Bacillales</taxon>
        <taxon>Staphylococcaceae</taxon>
        <taxon>Staphylococcus</taxon>
    </lineage>
</organism>
<accession>A7X430</accession>
<proteinExistence type="inferred from homology"/>
<keyword id="KW-0029">Amino-acid transport</keyword>
<keyword id="KW-1003">Cell membrane</keyword>
<keyword id="KW-0406">Ion transport</keyword>
<keyword id="KW-0472">Membrane</keyword>
<keyword id="KW-0915">Sodium</keyword>
<keyword id="KW-0739">Sodium transport</keyword>
<keyword id="KW-0769">Symport</keyword>
<keyword id="KW-0812">Transmembrane</keyword>
<keyword id="KW-1133">Transmembrane helix</keyword>
<keyword id="KW-0813">Transport</keyword>